<feature type="propeptide" id="PRO_0000024487" description="Leader peptide; cleaved by LepB" evidence="6">
    <location>
        <begin position="1"/>
        <end position="51"/>
    </location>
</feature>
<feature type="chain" id="PRO_0000024488" description="Pilin">
    <location>
        <begin position="52"/>
        <end position="121"/>
    </location>
</feature>
<feature type="topological domain" description="Periplasmic" evidence="3">
    <location>
        <begin position="1"/>
        <end position="75"/>
    </location>
</feature>
<feature type="transmembrane region" description="Helical">
    <location>
        <begin position="76"/>
        <end position="96"/>
    </location>
</feature>
<feature type="topological domain" description="Cytoplasmic" evidence="3">
    <location>
        <begin position="97"/>
        <end position="100"/>
    </location>
</feature>
<feature type="transmembrane region" description="Helical">
    <location>
        <begin position="101"/>
        <end position="121"/>
    </location>
</feature>
<feature type="modified residue" description="N-acetylalanine" evidence="6">
    <location>
        <position position="52"/>
    </location>
</feature>
<feature type="mutagenesis site" description="No production of pili." evidence="5">
    <original>G</original>
    <variation>S</variation>
    <location>
        <position position="9"/>
    </location>
</feature>
<feature type="mutagenesis site" description="No production of pili." evidence="5">
    <original>P</original>
    <variation>S</variation>
    <location>
        <position position="13"/>
    </location>
</feature>
<feature type="mutagenesis site" description="No production of propilin or pilin." evidence="2">
    <original>D</original>
    <variation>A</variation>
    <location>
        <position position="58"/>
    </location>
</feature>
<feature type="mutagenesis site" description="No production of propilin or pilin." evidence="2 5">
    <original>K</original>
    <variation>A</variation>
    <location>
        <position position="68"/>
    </location>
</feature>
<feature type="mutagenesis site" description="Resistant to phage R17 attachment." evidence="2 5">
    <original>K</original>
    <variation>E</variation>
    <location>
        <position position="68"/>
    </location>
</feature>
<feature type="mutagenesis site" description="No effect on propilin synthesis. No effect on pilus formation. Resistant to phage R17 attachment." evidence="2">
    <original>A</original>
    <variation>E</variation>
    <location>
        <position position="69"/>
    </location>
</feature>
<feature type="mutagenesis site" description="No effect on propilin synthesis. Defective pilus tip assembly." evidence="2">
    <original>F</original>
    <variation>V</variation>
    <location>
        <position position="71"/>
    </location>
</feature>
<feature type="mutagenesis site" description="No effect on propilin synthesis. No effect on pilus formation." evidence="2">
    <original>G</original>
    <variation>D</variation>
    <location>
        <position position="72"/>
    </location>
</feature>
<feature type="mutagenesis site" description="No effect on propilin synthesis. No effect on pilus formation." evidence="2 5">
    <original>K</original>
    <variation>A</variation>
    <variation>T</variation>
    <location>
        <position position="73"/>
    </location>
</feature>
<feature type="mutagenesis site" description="No effect on propilin synthesis, no effect on pilus formation, resistant to phage R17 attachment (Ref.11). About 67% conjugation efficiency, E.coli still sensitive to CdiA-CT toxin (Ref.12)." evidence="2 4">
    <original>D</original>
    <variation>G</variation>
    <location>
        <position position="74"/>
    </location>
</feature>
<feature type="mutagenesis site" description="No effect on propilin synthesis. Resistant to phage R17 attachment." evidence="2">
    <original>K</original>
    <variation>A</variation>
    <location>
        <position position="79"/>
    </location>
</feature>
<feature type="mutagenesis site" description="No effect on propilin synthesis. Defective pilus tip assembly." evidence="2">
    <original>K</original>
    <variation>I</variation>
    <location>
        <position position="79"/>
    </location>
</feature>
<feature type="mutagenesis site" description="Slightly reduced phage R17 attachment, reduced ability to retract." evidence="5">
    <original>V</original>
    <variation>I</variation>
    <location>
        <position position="81"/>
    </location>
</feature>
<feature type="mutagenesis site" description="No effect on propilin synthesis. Defective pilus tip assembly." evidence="2">
    <original>E</original>
    <variation>A</variation>
    <variation>G</variation>
    <location>
        <position position="85"/>
    </location>
</feature>
<feature type="mutagenesis site" description="Production of small amounts of propilin and pilin." evidence="2">
    <original>Y</original>
    <variation>D</variation>
    <location>
        <position position="93"/>
    </location>
</feature>
<feature type="mutagenesis site" description="No effect on propilin synthesis. No effect on pilus formation. Inability to support R17 phage eclipse." evidence="2">
    <original>K</original>
    <variation>A</variation>
    <variation>R</variation>
    <variation>V</variation>
    <location>
        <position position="97"/>
    </location>
</feature>
<feature type="mutagenesis site" description="Reduced cleavage of propilin to pilin; when associated with A-100." evidence="2">
    <original>K</original>
    <variation>A</variation>
    <location>
        <position position="97"/>
    </location>
</feature>
<feature type="mutagenesis site" description="No effect on propilin synthesis. No effect on pilus formation." evidence="2">
    <original>N</original>
    <variation>A</variation>
    <location>
        <position position="98"/>
    </location>
</feature>
<feature type="mutagenesis site" description="No effect on propilin synthesis. No effect on pilus formation. Inability to support R17 phage eclipse." evidence="2">
    <original>V</original>
    <variation>A</variation>
    <location>
        <position position="99"/>
    </location>
</feature>
<feature type="mutagenesis site" description="No effect on propilin synthesis. No effect on pilus formation. Inability to support R17 phage eclipse. Reduced DNA transfer." evidence="2">
    <original>K</original>
    <variation>A</variation>
    <variation>R</variation>
    <variation>T</variation>
    <location>
        <position position="100"/>
    </location>
</feature>
<feature type="mutagenesis site" description="Reduced cleavage of propilin to pilin; when associated with A-97." evidence="2">
    <original>K</original>
    <variation>A</variation>
    <location>
        <position position="100"/>
    </location>
</feature>
<feature type="mutagenesis site" description="No effect on propilin synthesis. No effect on pilus formation. Inability to support R17 phage eclipse. Reduced DNA transfer." evidence="2">
    <original>F</original>
    <variation>A</variation>
    <location>
        <position position="101"/>
    </location>
</feature>
<feature type="mutagenesis site" description="No effect on propilin synthesis. No effect on pilus formation. Inability to support R17 phage eclipse. Reduced DNA transfer." evidence="2">
    <original>F</original>
    <variation>V</variation>
    <location>
        <position position="105"/>
    </location>
</feature>
<feature type="mutagenesis site" description="No effect on propilin synthesis. No effect on pilus formation. Inability to support R17 phage eclipse. Reduced DNA transfer." evidence="2">
    <original>F</original>
    <variation>V</variation>
    <location>
        <position position="111"/>
    </location>
</feature>
<feature type="mutagenesis site" description="Resistant to phage R17, conjugation normal, provides partial resistance to CdiA-CT toxin." evidence="4">
    <original>G</original>
    <variation>C</variation>
    <location>
        <position position="120"/>
    </location>
</feature>
<feature type="mutagenesis site" description="Resistant to phages R17 and QB attachment." evidence="5">
    <original>G</original>
    <variation>D</variation>
    <location>
        <position position="120"/>
    </location>
</feature>
<feature type="mutagenesis site" description="No effect on propilin synthesis. Defective pilus tip assembly." evidence="8">
    <original>L</original>
    <variation>S</variation>
    <location>
        <position position="121"/>
    </location>
</feature>
<feature type="sequence conflict" description="In Ref. 1; AAA24910." evidence="9" ref="1">
    <original>G</original>
    <variation>V</variation>
    <location>
        <position position="115"/>
    </location>
</feature>
<protein>
    <recommendedName>
        <fullName>Pilin</fullName>
    </recommendedName>
    <alternativeName>
        <fullName>F-pilin</fullName>
    </alternativeName>
</protein>
<geneLocation type="plasmid">
    <name>F</name>
</geneLocation>
<geneLocation type="plasmid">
    <name>IncFI R386</name>
</geneLocation>
<geneLocation type="plasmid">
    <name>IncFI ColV2-K94</name>
</geneLocation>
<geneLocation type="plasmid">
    <name>IncFI ColVBtrp</name>
</geneLocation>
<sequence length="121" mass="12768">MNAVLSVQGASAPVKKKSFFSKFTRLNMLRLARAVIPAAVLMMFFPQLAMAAGSSGQDLMASGNTTVKATFGKDSSVVKWVVLAEVLVGAVMYMMTKNVKFLAGFAIISVFIAVGMAVVGL</sequence>
<evidence type="ECO:0000269" key="1">
    <source>
    </source>
</evidence>
<evidence type="ECO:0000269" key="2">
    <source>
    </source>
</evidence>
<evidence type="ECO:0000269" key="3">
    <source>
    </source>
</evidence>
<evidence type="ECO:0000269" key="4">
    <source>
    </source>
</evidence>
<evidence type="ECO:0000269" key="5">
    <source>
    </source>
</evidence>
<evidence type="ECO:0000269" key="6">
    <source>
    </source>
</evidence>
<evidence type="ECO:0000269" key="7">
    <source>
    </source>
</evidence>
<evidence type="ECO:0000269" key="8">
    <source>
    </source>
</evidence>
<evidence type="ECO:0000305" key="9"/>
<comment type="function">
    <text evidence="3 4 6">Propilin is the precursor of the pilus subunit, pilin, that forms conjugative pili, the filamentous surface appendages required for cell-to-cell contact during the earlier stages of bacterial conjugation, and that retract after contact is established. Mature pilin is assembled with the help of TraQ and TraX (PubMed:1464628, PubMed:6090426). Functions as a receptor for CdiA-CT from E.cloacae and E.coli, although it is not clear if this is physiologically relevant (PubMed:24889811).</text>
</comment>
<comment type="subunit">
    <text evidence="1 3 7">Monomer. Interacts with itself to form filaments; also interacts with TraQ.</text>
</comment>
<comment type="subcellular location">
    <subcellularLocation>
        <location evidence="3">Cell inner membrane</location>
        <topology evidence="3">Multi-pass membrane protein</topology>
    </subcellularLocation>
    <subcellularLocation>
        <location evidence="3">Secreted</location>
    </subcellularLocation>
    <text>Propilin is directed to the inner membrane, where it is cleaved and acetylated. Mature pilin forms filaments that are secreted to form the conjugative pilus.</text>
</comment>
<comment type="disruption phenotype">
    <text evidence="4">Loss of sensitivity to toxin CdiA-CT.</text>
</comment>
<comment type="similarity">
    <text evidence="9">Belongs to the TraA family.</text>
</comment>
<name>PIL1_ECOLI</name>
<gene>
    <name type="primary">traA</name>
    <name type="ordered locus">ECOK12F074</name>
</gene>
<accession>P04737</accession>
<accession>P14517</accession>
<keyword id="KW-0002">3D-structure</keyword>
<keyword id="KW-0007">Acetylation</keyword>
<keyword id="KW-0997">Cell inner membrane</keyword>
<keyword id="KW-1003">Cell membrane</keyword>
<keyword id="KW-0184">Conjugation</keyword>
<keyword id="KW-0903">Direct protein sequencing</keyword>
<keyword id="KW-0472">Membrane</keyword>
<keyword id="KW-0614">Plasmid</keyword>
<keyword id="KW-0964">Secreted</keyword>
<keyword id="KW-0812">Transmembrane</keyword>
<keyword id="KW-1133">Transmembrane helix</keyword>
<dbReference type="EMBL" id="K01147">
    <property type="protein sequence ID" value="AAA24910.1"/>
    <property type="molecule type" value="Genomic_DNA"/>
</dbReference>
<dbReference type="EMBL" id="U01159">
    <property type="protein sequence ID" value="AAC44177.1"/>
    <property type="molecule type" value="Genomic_DNA"/>
</dbReference>
<dbReference type="EMBL" id="M11322">
    <property type="protein sequence ID" value="AAA98308.1"/>
    <property type="molecule type" value="Genomic_DNA"/>
</dbReference>
<dbReference type="EMBL" id="AP001918">
    <property type="protein sequence ID" value="BAA97944.1"/>
    <property type="molecule type" value="Genomic_DNA"/>
</dbReference>
<dbReference type="EMBL" id="K03086">
    <property type="protein sequence ID" value="AAA92543.1"/>
    <property type="molecule type" value="Genomic_DNA"/>
</dbReference>
<dbReference type="EMBL" id="K03087">
    <property type="protein sequence ID" value="AAA92545.1"/>
    <property type="molecule type" value="Genomic_DNA"/>
</dbReference>
<dbReference type="PIR" id="A23106">
    <property type="entry name" value="YQECFX"/>
</dbReference>
<dbReference type="PIR" id="A29332">
    <property type="entry name" value="YQECF"/>
</dbReference>
<dbReference type="RefSeq" id="NP_061453.1">
    <property type="nucleotide sequence ID" value="NC_002483.1"/>
</dbReference>
<dbReference type="RefSeq" id="NP_862919.1">
    <property type="nucleotide sequence ID" value="NC_004998.1"/>
</dbReference>
<dbReference type="RefSeq" id="WP_000994779.1">
    <property type="nucleotide sequence ID" value="NZ_SSUW01000046.1"/>
</dbReference>
<dbReference type="RefSeq" id="YP_009060156.1">
    <property type="nucleotide sequence ID" value="NC_024956.1"/>
</dbReference>
<dbReference type="RefSeq" id="YP_009068351.1">
    <property type="nucleotide sequence ID" value="NC_025139.1"/>
</dbReference>
<dbReference type="RefSeq" id="YP_009070616.1">
    <property type="nucleotide sequence ID" value="NC_025175.1"/>
</dbReference>
<dbReference type="RefSeq" id="YP_009071230.1">
    <property type="nucleotide sequence ID" value="NC_025179.1"/>
</dbReference>
<dbReference type="PDB" id="5LER">
    <property type="method" value="EM"/>
    <property type="resolution" value="5.00 A"/>
    <property type="chains" value="1A/1B/1C/1D/1E/1F/1G/1H/1I/1J/1K/1L/1M/1N/1O/2A/2B/2C/2D/2E/2F/2G/2H/2I/2J/2K/2L/2M/2N/2O=57-121"/>
</dbReference>
<dbReference type="PDB" id="5LFB">
    <property type="method" value="EM"/>
    <property type="resolution" value="5.00 A"/>
    <property type="chains" value="1A/1B/1C/1D/1E/1F/1G/1H/1I/1J/1K/1L/1M/1N/1O/2A/2B/2C/2D/2E/2F/2G/2H/2I/2J/2K/2L/2M/2N/2O=57-121"/>
</dbReference>
<dbReference type="PDB" id="9MOQ">
    <property type="method" value="EM"/>
    <property type="resolution" value="3.50 A"/>
    <property type="chains" value="A=1-121"/>
</dbReference>
<dbReference type="PDBsum" id="5LER"/>
<dbReference type="PDBsum" id="5LFB"/>
<dbReference type="PDBsum" id="9MOQ"/>
<dbReference type="EMDB" id="EMD-48478"/>
<dbReference type="SMR" id="P04737"/>
<dbReference type="IntAct" id="P04737">
    <property type="interactions" value="1"/>
</dbReference>
<dbReference type="iPTMnet" id="P04737"/>
<dbReference type="KEGG" id="ecoc:C3026_24475"/>
<dbReference type="PATRIC" id="fig|83333.107.peg.639"/>
<dbReference type="OrthoDB" id="6614884at2"/>
<dbReference type="PRO" id="PR:P04737"/>
<dbReference type="GO" id="GO:0005576">
    <property type="term" value="C:extracellular region"/>
    <property type="evidence" value="ECO:0007669"/>
    <property type="project" value="UniProtKB-SubCell"/>
</dbReference>
<dbReference type="GO" id="GO:0005886">
    <property type="term" value="C:plasma membrane"/>
    <property type="evidence" value="ECO:0007669"/>
    <property type="project" value="UniProtKB-SubCell"/>
</dbReference>
<dbReference type="InterPro" id="IPR008873">
    <property type="entry name" value="TraA"/>
</dbReference>
<dbReference type="NCBIfam" id="NF010294">
    <property type="entry name" value="PRK13734.1"/>
    <property type="match status" value="1"/>
</dbReference>
<dbReference type="NCBIfam" id="TIGR02758">
    <property type="entry name" value="TraA_TIGR"/>
    <property type="match status" value="1"/>
</dbReference>
<dbReference type="Pfam" id="PF05513">
    <property type="entry name" value="TraA"/>
    <property type="match status" value="1"/>
</dbReference>
<organism>
    <name type="scientific">Escherichia coli (strain K12)</name>
    <dbReference type="NCBI Taxonomy" id="83333"/>
    <lineage>
        <taxon>Bacteria</taxon>
        <taxon>Pseudomonadati</taxon>
        <taxon>Pseudomonadota</taxon>
        <taxon>Gammaproteobacteria</taxon>
        <taxon>Enterobacterales</taxon>
        <taxon>Enterobacteriaceae</taxon>
        <taxon>Escherichia</taxon>
    </lineage>
</organism>
<proteinExistence type="evidence at protein level"/>
<reference key="1">
    <citation type="journal article" date="1984" name="J. Bacteriol.">
        <title>DNA sequence of the F traALE region that includes the gene for F pilin.</title>
        <authorList>
            <person name="Frost L.S."/>
            <person name="Paranchych W."/>
            <person name="Willetts N.S."/>
        </authorList>
    </citation>
    <scope>NUCLEOTIDE SEQUENCE [GENOMIC DNA]</scope>
    <scope>PROTEIN SEQUENCE OF 52-59</scope>
    <scope>ACETYLATION AT ALA-52</scope>
    <scope>FUNCTION</scope>
    <source>
        <plasmid>F</plasmid>
    </source>
</reference>
<reference key="2">
    <citation type="journal article" date="1994" name="Microbiol. Rev.">
        <title>Analysis of the sequence and gene products of the transfer region of the F sex factor.</title>
        <authorList>
            <person name="Frost L.S."/>
            <person name="Ippen-Ihler K."/>
            <person name="Skurray R.A."/>
        </authorList>
    </citation>
    <scope>NUCLEOTIDE SEQUENCE [GENOMIC DNA]</scope>
    <source>
        <plasmid>F</plasmid>
    </source>
</reference>
<reference key="3">
    <citation type="journal article" date="1985" name="J. Bacteriol.">
        <title>Characterization and sequence analysis of pilin from F-like plasmids.</title>
        <authorList>
            <person name="Frost L.S."/>
            <person name="Finlay B.B."/>
            <person name="Opgenorth A."/>
            <person name="Paranchych W."/>
            <person name="Lee J.S."/>
        </authorList>
    </citation>
    <scope>NUCLEOTIDE SEQUENCE [GENOMIC DNA]</scope>
    <source>
        <plasmid>IncFI ColV2-K94</plasmid>
        <plasmid>IncFI ColVBtrp</plasmid>
        <plasmid>IncFI R386</plasmid>
    </source>
</reference>
<reference key="4">
    <citation type="submission" date="2000-04" db="EMBL/GenBank/DDBJ databases">
        <title>Complete nucleotide sequence of the F plasmid: its implications for organization and diversification of plasmid genomes.</title>
        <authorList>
            <person name="Shimizu H."/>
            <person name="Saitoh Y."/>
            <person name="Suda Y."/>
            <person name="Uehara K."/>
            <person name="Sampei G."/>
            <person name="Mizobuchi K."/>
        </authorList>
    </citation>
    <scope>NUCLEOTIDE SEQUENCE [LARGE SCALE GENOMIC DNA]</scope>
    <source>
        <strain>K12 / CR63</strain>
        <plasmid>F</plasmid>
    </source>
</reference>
<reference key="5">
    <citation type="journal article" date="1988" name="Mol. Gen. Genet.">
        <title>DNA sequence analysis of point mutations in traA, the F pilin gene, reveal two domains involved in F-specific bacteriophage attachment.</title>
        <authorList>
            <person name="Frost L.S."/>
            <person name="Paranchych W."/>
        </authorList>
    </citation>
    <scope>BACTERIOPHAGE ATTACHMENT TO PILIN</scope>
    <scope>MUTAGENESIS OF GLY-9; PRO-13; LYS-68; LYS-73; VAL-81 AND GLY-120</scope>
</reference>
<reference key="6">
    <citation type="journal article" date="1992" name="J. Biol. Chem.">
        <title>Characterization of F-pilin as an inner membrane component of Escherichia coli K12.</title>
        <authorList>
            <person name="Paiva W.D."/>
            <person name="Grossman T."/>
            <person name="Silverman P.M."/>
        </authorList>
    </citation>
    <scope>FUNCTION</scope>
    <scope>SUBCELLULAR LOCATION</scope>
    <scope>SUBUNIT</scope>
    <scope>TOPOLOGY</scope>
    <source>
        <plasmid>F</plasmid>
    </source>
</reference>
<reference key="7">
    <citation type="journal article" date="1993" name="J. Bacteriol.">
        <title>Synthesis of F pilin.</title>
        <authorList>
            <person name="Maneewannakul K."/>
            <person name="Maneewannakul S."/>
            <person name="Ippen-Ihler K."/>
        </authorList>
    </citation>
    <scope>INTERACTION WITH TRAQ</scope>
    <source>
        <plasmid>F</plasmid>
    </source>
</reference>
<reference key="8">
    <citation type="journal article" date="1996" name="J. Bacteriol.">
        <title>Membrane insertion of the F-pilin subunit is Sec independent but requires leader peptidase B and the proton motive force.</title>
        <authorList>
            <person name="Majdalani N."/>
            <person name="Ippen-Ihler K."/>
        </authorList>
    </citation>
    <scope>CLEAVAGE OF LEADER PEPTIDE BY LEPB</scope>
    <source>
        <plasmid>F</plasmid>
    </source>
</reference>
<reference key="9">
    <citation type="journal article" date="1998" name="J. Mol. Biol.">
        <title>Epitopes fused to F-pilin are incorporated into functional recombinant pili.</title>
        <authorList>
            <person name="Rondot S."/>
            <person name="Anthony K.G."/>
            <person name="Duebel S."/>
            <person name="Ida N."/>
            <person name="Wiemann S."/>
            <person name="Beyreuther K."/>
            <person name="Frost L.S."/>
            <person name="Little M."/>
            <person name="Breitling F."/>
        </authorList>
    </citation>
    <scope>MUTAGENESIS OF LEU-121</scope>
</reference>
<reference key="10">
    <citation type="journal article" date="1999" name="Mol. Microbiol.">
        <title>Interaction between the F plasmid TraA (F-pilin) and TraQ proteins.</title>
        <authorList>
            <person name="Harris R.L."/>
            <person name="Sholl K.A."/>
            <person name="Conrad M.N."/>
            <person name="Dresser M.E."/>
            <person name="Silverman P.M."/>
        </authorList>
    </citation>
    <scope>INTERACTION WITH TRAQ</scope>
    <source>
        <plasmid>F</plasmid>
    </source>
</reference>
<reference key="11">
    <citation type="journal article" date="2002" name="Mol. Microbiol.">
        <title>Mutational analysis of F-pilin reveals domains for pilus assembly, phage infection and DNA transfer.</title>
        <authorList>
            <person name="Manchak J."/>
            <person name="Anthony K.G."/>
            <person name="Frost L.S."/>
        </authorList>
    </citation>
    <scope>MUTAGENESIS OF ASP-58; LYS-68; ALA-69; PHE-71; GLY-72; LYS-73; ASP-74; LYS-79; GLU-85; TYR-93; LYS-97; ASN-98; VAL-99; LYS-100; PHE-101; PHE-105 AND PHE-111</scope>
    <source>
        <plasmid>F</plasmid>
    </source>
</reference>
<reference key="12">
    <citation type="journal article" date="2014" name="Mol. Microbiol.">
        <title>The F pilus mediates a novel pathway of CDI toxin import.</title>
        <authorList>
            <person name="Beck C.M."/>
            <person name="Diner E.J."/>
            <person name="Kim J.J."/>
            <person name="Low D.A."/>
            <person name="Hayes C.S."/>
        </authorList>
    </citation>
    <scope>FUNCTION AS RECEPTOR FOR CDIA-CT</scope>
    <scope>DISRUPTION PHENOTYPE</scope>
    <scope>MUTAGENESIS OF ASP-74 AND GLY-120</scope>
    <source>
        <strain>K12 / X90</strain>
        <plasmid>F</plasmid>
    </source>
</reference>